<evidence type="ECO:0000255" key="1">
    <source>
        <dbReference type="PROSITE-ProRule" id="PRU00465"/>
    </source>
</evidence>
<evidence type="ECO:0000305" key="2"/>
<keyword id="KW-0001">2Fe-2S</keyword>
<keyword id="KW-0150">Chloroplast</keyword>
<keyword id="KW-0903">Direct protein sequencing</keyword>
<keyword id="KW-0249">Electron transport</keyword>
<keyword id="KW-0408">Iron</keyword>
<keyword id="KW-0411">Iron-sulfur</keyword>
<keyword id="KW-0479">Metal-binding</keyword>
<keyword id="KW-0934">Plastid</keyword>
<keyword id="KW-0813">Transport</keyword>
<protein>
    <recommendedName>
        <fullName>Ferredoxin-2</fullName>
    </recommendedName>
    <alternativeName>
        <fullName>Ferredoxin II</fullName>
    </alternativeName>
</protein>
<accession>P00231</accession>
<sequence>AASYKVTFVTPSGTNTITCPADTYVLDAAEESGLDLPYSCRAGACSSCAGKVTAGAVNQEDGSFLEEEQMEAGWVLTCVAYPTSDVTIETHKEEDLTA</sequence>
<comment type="function">
    <text>Ferredoxins are iron-sulfur proteins that transfer electrons in a wide variety of metabolic reactions.</text>
</comment>
<comment type="cofactor">
    <cofactor>
        <name>[2Fe-2S] cluster</name>
        <dbReference type="ChEBI" id="CHEBI:190135"/>
    </cofactor>
    <text>Binds 1 [2Fe-2S] cluster.</text>
</comment>
<comment type="subcellular location">
    <subcellularLocation>
        <location>Plastid</location>
        <location>Chloroplast</location>
    </subcellularLocation>
</comment>
<comment type="similarity">
    <text evidence="2">Belongs to the 2Fe2S plant-type ferredoxin family.</text>
</comment>
<dbReference type="PIR" id="A00237">
    <property type="entry name" value="FEFW2"/>
</dbReference>
<dbReference type="SMR" id="P00231"/>
<dbReference type="GO" id="GO:0009570">
    <property type="term" value="C:chloroplast stroma"/>
    <property type="evidence" value="ECO:0007669"/>
    <property type="project" value="TreeGrafter"/>
</dbReference>
<dbReference type="GO" id="GO:0051537">
    <property type="term" value="F:2 iron, 2 sulfur cluster binding"/>
    <property type="evidence" value="ECO:0007669"/>
    <property type="project" value="UniProtKB-KW"/>
</dbReference>
<dbReference type="GO" id="GO:0009055">
    <property type="term" value="F:electron transfer activity"/>
    <property type="evidence" value="ECO:0007669"/>
    <property type="project" value="InterPro"/>
</dbReference>
<dbReference type="GO" id="GO:0046872">
    <property type="term" value="F:metal ion binding"/>
    <property type="evidence" value="ECO:0007669"/>
    <property type="project" value="UniProtKB-KW"/>
</dbReference>
<dbReference type="GO" id="GO:0022900">
    <property type="term" value="P:electron transport chain"/>
    <property type="evidence" value="ECO:0007669"/>
    <property type="project" value="InterPro"/>
</dbReference>
<dbReference type="CDD" id="cd00207">
    <property type="entry name" value="fer2"/>
    <property type="match status" value="1"/>
</dbReference>
<dbReference type="FunFam" id="3.10.20.30:FF:000014">
    <property type="entry name" value="Ferredoxin"/>
    <property type="match status" value="1"/>
</dbReference>
<dbReference type="Gene3D" id="3.10.20.30">
    <property type="match status" value="1"/>
</dbReference>
<dbReference type="InterPro" id="IPR036010">
    <property type="entry name" value="2Fe-2S_ferredoxin-like_sf"/>
</dbReference>
<dbReference type="InterPro" id="IPR001041">
    <property type="entry name" value="2Fe-2S_ferredoxin-type"/>
</dbReference>
<dbReference type="InterPro" id="IPR006058">
    <property type="entry name" value="2Fe2S_fd_BS"/>
</dbReference>
<dbReference type="InterPro" id="IPR012675">
    <property type="entry name" value="Beta-grasp_dom_sf"/>
</dbReference>
<dbReference type="InterPro" id="IPR010241">
    <property type="entry name" value="Fd_pln"/>
</dbReference>
<dbReference type="NCBIfam" id="TIGR02008">
    <property type="entry name" value="fdx_plant"/>
    <property type="match status" value="1"/>
</dbReference>
<dbReference type="PANTHER" id="PTHR43112">
    <property type="entry name" value="FERREDOXIN"/>
    <property type="match status" value="1"/>
</dbReference>
<dbReference type="PANTHER" id="PTHR43112:SF3">
    <property type="entry name" value="FERREDOXIN-2, CHLOROPLASTIC"/>
    <property type="match status" value="1"/>
</dbReference>
<dbReference type="Pfam" id="PF00111">
    <property type="entry name" value="Fer2"/>
    <property type="match status" value="1"/>
</dbReference>
<dbReference type="SUPFAM" id="SSF54292">
    <property type="entry name" value="2Fe-2S ferredoxin-like"/>
    <property type="match status" value="1"/>
</dbReference>
<dbReference type="PROSITE" id="PS00197">
    <property type="entry name" value="2FE2S_FER_1"/>
    <property type="match status" value="1"/>
</dbReference>
<dbReference type="PROSITE" id="PS51085">
    <property type="entry name" value="2FE2S_FER_2"/>
    <property type="match status" value="1"/>
</dbReference>
<reference key="1">
    <citation type="journal article" date="1978" name="J. Biochem.">
        <title>Amino acid sequences of two ferredoxins from pokeweed, Phytolacca americana.</title>
        <authorList>
            <person name="Wakabayashi S."/>
            <person name="Hase T."/>
            <person name="Wada K."/>
            <person name="Matsubara H."/>
            <person name="Suzuki K."/>
            <person name="Takaichi S."/>
        </authorList>
    </citation>
    <scope>PROTEIN SEQUENCE</scope>
</reference>
<organism>
    <name type="scientific">Phytolacca americana</name>
    <name type="common">American pokeweed</name>
    <name type="synonym">Phytolacca decandra</name>
    <dbReference type="NCBI Taxonomy" id="3527"/>
    <lineage>
        <taxon>Eukaryota</taxon>
        <taxon>Viridiplantae</taxon>
        <taxon>Streptophyta</taxon>
        <taxon>Embryophyta</taxon>
        <taxon>Tracheophyta</taxon>
        <taxon>Spermatophyta</taxon>
        <taxon>Magnoliopsida</taxon>
        <taxon>eudicotyledons</taxon>
        <taxon>Gunneridae</taxon>
        <taxon>Pentapetalae</taxon>
        <taxon>Caryophyllales</taxon>
        <taxon>Phytolaccaceae</taxon>
        <taxon>Phytolacca</taxon>
    </lineage>
</organism>
<proteinExistence type="evidence at protein level"/>
<name>FER2_PHYAM</name>
<feature type="chain" id="PRO_0000189349" description="Ferredoxin-2">
    <location>
        <begin position="1"/>
        <end position="98"/>
    </location>
</feature>
<feature type="domain" description="2Fe-2S ferredoxin-type" evidence="1">
    <location>
        <begin position="4"/>
        <end position="94"/>
    </location>
</feature>
<feature type="binding site">
    <location>
        <position position="40"/>
    </location>
    <ligand>
        <name>[2Fe-2S] cluster</name>
        <dbReference type="ChEBI" id="CHEBI:190135"/>
    </ligand>
</feature>
<feature type="binding site">
    <location>
        <position position="45"/>
    </location>
    <ligand>
        <name>[2Fe-2S] cluster</name>
        <dbReference type="ChEBI" id="CHEBI:190135"/>
    </ligand>
</feature>
<feature type="binding site">
    <location>
        <position position="48"/>
    </location>
    <ligand>
        <name>[2Fe-2S] cluster</name>
        <dbReference type="ChEBI" id="CHEBI:190135"/>
    </ligand>
</feature>
<feature type="binding site">
    <location>
        <position position="78"/>
    </location>
    <ligand>
        <name>[2Fe-2S] cluster</name>
        <dbReference type="ChEBI" id="CHEBI:190135"/>
    </ligand>
</feature>